<protein>
    <recommendedName>
        <fullName evidence="1">Urease subunit beta</fullName>
        <ecNumber evidence="1">3.5.1.5</ecNumber>
    </recommendedName>
    <alternativeName>
        <fullName evidence="1">Urea amidohydrolase subunit beta</fullName>
    </alternativeName>
</protein>
<proteinExistence type="inferred from homology"/>
<dbReference type="EC" id="3.5.1.5" evidence="1"/>
<dbReference type="EMBL" id="CP000325">
    <property type="protein sequence ID" value="ABL05282.1"/>
    <property type="molecule type" value="Genomic_DNA"/>
</dbReference>
<dbReference type="RefSeq" id="WP_011740894.1">
    <property type="nucleotide sequence ID" value="NC_008611.1"/>
</dbReference>
<dbReference type="SMR" id="A0PSG3"/>
<dbReference type="KEGG" id="mul:MUL_3030"/>
<dbReference type="eggNOG" id="COG0832">
    <property type="taxonomic scope" value="Bacteria"/>
</dbReference>
<dbReference type="HOGENOM" id="CLU_129707_1_1_11"/>
<dbReference type="UniPathway" id="UPA00258">
    <property type="reaction ID" value="UER00370"/>
</dbReference>
<dbReference type="Proteomes" id="UP000000765">
    <property type="component" value="Chromosome"/>
</dbReference>
<dbReference type="GO" id="GO:0035550">
    <property type="term" value="C:urease complex"/>
    <property type="evidence" value="ECO:0007669"/>
    <property type="project" value="InterPro"/>
</dbReference>
<dbReference type="GO" id="GO:0009039">
    <property type="term" value="F:urease activity"/>
    <property type="evidence" value="ECO:0007669"/>
    <property type="project" value="UniProtKB-UniRule"/>
</dbReference>
<dbReference type="GO" id="GO:0043419">
    <property type="term" value="P:urea catabolic process"/>
    <property type="evidence" value="ECO:0007669"/>
    <property type="project" value="UniProtKB-UniRule"/>
</dbReference>
<dbReference type="CDD" id="cd00407">
    <property type="entry name" value="Urease_beta"/>
    <property type="match status" value="1"/>
</dbReference>
<dbReference type="Gene3D" id="2.10.150.10">
    <property type="entry name" value="Urease, beta subunit"/>
    <property type="match status" value="1"/>
</dbReference>
<dbReference type="HAMAP" id="MF_01954">
    <property type="entry name" value="Urease_beta"/>
    <property type="match status" value="1"/>
</dbReference>
<dbReference type="InterPro" id="IPR002019">
    <property type="entry name" value="Urease_beta-like"/>
</dbReference>
<dbReference type="InterPro" id="IPR036461">
    <property type="entry name" value="Urease_betasu_sf"/>
</dbReference>
<dbReference type="InterPro" id="IPR050069">
    <property type="entry name" value="Urease_subunit"/>
</dbReference>
<dbReference type="NCBIfam" id="NF009682">
    <property type="entry name" value="PRK13203.1"/>
    <property type="match status" value="1"/>
</dbReference>
<dbReference type="NCBIfam" id="TIGR00192">
    <property type="entry name" value="urease_beta"/>
    <property type="match status" value="1"/>
</dbReference>
<dbReference type="PANTHER" id="PTHR33569">
    <property type="entry name" value="UREASE"/>
    <property type="match status" value="1"/>
</dbReference>
<dbReference type="PANTHER" id="PTHR33569:SF1">
    <property type="entry name" value="UREASE"/>
    <property type="match status" value="1"/>
</dbReference>
<dbReference type="Pfam" id="PF00699">
    <property type="entry name" value="Urease_beta"/>
    <property type="match status" value="1"/>
</dbReference>
<dbReference type="SUPFAM" id="SSF51278">
    <property type="entry name" value="Urease, beta-subunit"/>
    <property type="match status" value="1"/>
</dbReference>
<sequence>MIPGEIHYGRGDIEINTTAQRIEMNVVNTGDRPVQVGSHVHFPQANAALSFDRAAAHGYRLDIPAATAVRFEPGVAHTVSLVPLEGRRAVYGLTLNPPGRLDD</sequence>
<reference key="1">
    <citation type="journal article" date="2007" name="Genome Res.">
        <title>Reductive evolution and niche adaptation inferred from the genome of Mycobacterium ulcerans, the causative agent of Buruli ulcer.</title>
        <authorList>
            <person name="Stinear T.P."/>
            <person name="Seemann T."/>
            <person name="Pidot S."/>
            <person name="Frigui W."/>
            <person name="Reysset G."/>
            <person name="Garnier T."/>
            <person name="Meurice G."/>
            <person name="Simon D."/>
            <person name="Bouchier C."/>
            <person name="Ma L."/>
            <person name="Tichit M."/>
            <person name="Porter J.L."/>
            <person name="Ryan J."/>
            <person name="Johnson P.D.R."/>
            <person name="Davies J.K."/>
            <person name="Jenkin G.A."/>
            <person name="Small P.L.C."/>
            <person name="Jones L.M."/>
            <person name="Tekaia F."/>
            <person name="Laval F."/>
            <person name="Daffe M."/>
            <person name="Parkhill J."/>
            <person name="Cole S.T."/>
        </authorList>
    </citation>
    <scope>NUCLEOTIDE SEQUENCE [LARGE SCALE GENOMIC DNA]</scope>
    <source>
        <strain>Agy99</strain>
    </source>
</reference>
<gene>
    <name evidence="1" type="primary">ureB</name>
    <name type="ordered locus">MUL_3030</name>
</gene>
<comment type="catalytic activity">
    <reaction evidence="1">
        <text>urea + 2 H2O + H(+) = hydrogencarbonate + 2 NH4(+)</text>
        <dbReference type="Rhea" id="RHEA:20557"/>
        <dbReference type="ChEBI" id="CHEBI:15377"/>
        <dbReference type="ChEBI" id="CHEBI:15378"/>
        <dbReference type="ChEBI" id="CHEBI:16199"/>
        <dbReference type="ChEBI" id="CHEBI:17544"/>
        <dbReference type="ChEBI" id="CHEBI:28938"/>
        <dbReference type="EC" id="3.5.1.5"/>
    </reaction>
</comment>
<comment type="pathway">
    <text evidence="1">Nitrogen metabolism; urea degradation; CO(2) and NH(3) from urea (urease route): step 1/1.</text>
</comment>
<comment type="subunit">
    <text evidence="1">Heterotrimer of UreA (gamma), UreB (beta) and UreC (alpha) subunits. Three heterotrimers associate to form the active enzyme.</text>
</comment>
<comment type="subcellular location">
    <subcellularLocation>
        <location evidence="1">Cytoplasm</location>
    </subcellularLocation>
</comment>
<comment type="similarity">
    <text evidence="1">Belongs to the urease beta subunit family.</text>
</comment>
<evidence type="ECO:0000255" key="1">
    <source>
        <dbReference type="HAMAP-Rule" id="MF_01954"/>
    </source>
</evidence>
<name>URE2_MYCUA</name>
<keyword id="KW-0963">Cytoplasm</keyword>
<keyword id="KW-0378">Hydrolase</keyword>
<feature type="chain" id="PRO_1000070749" description="Urease subunit beta">
    <location>
        <begin position="1"/>
        <end position="103"/>
    </location>
</feature>
<organism>
    <name type="scientific">Mycobacterium ulcerans (strain Agy99)</name>
    <dbReference type="NCBI Taxonomy" id="362242"/>
    <lineage>
        <taxon>Bacteria</taxon>
        <taxon>Bacillati</taxon>
        <taxon>Actinomycetota</taxon>
        <taxon>Actinomycetes</taxon>
        <taxon>Mycobacteriales</taxon>
        <taxon>Mycobacteriaceae</taxon>
        <taxon>Mycobacterium</taxon>
        <taxon>Mycobacterium ulcerans group</taxon>
    </lineage>
</organism>
<accession>A0PSG3</accession>